<gene>
    <name evidence="1" type="primary">murB</name>
    <name type="ordered locus">alr5066</name>
</gene>
<proteinExistence type="inferred from homology"/>
<dbReference type="EC" id="1.3.1.98" evidence="1"/>
<dbReference type="EMBL" id="BA000019">
    <property type="protein sequence ID" value="BAB76765.1"/>
    <property type="molecule type" value="Genomic_DNA"/>
</dbReference>
<dbReference type="PIR" id="AB2439">
    <property type="entry name" value="AB2439"/>
</dbReference>
<dbReference type="RefSeq" id="WP_010999192.1">
    <property type="nucleotide sequence ID" value="NZ_RSCN01000014.1"/>
</dbReference>
<dbReference type="SMR" id="Q8YM74"/>
<dbReference type="STRING" id="103690.gene:10497124"/>
<dbReference type="KEGG" id="ana:alr5066"/>
<dbReference type="eggNOG" id="COG0812">
    <property type="taxonomic scope" value="Bacteria"/>
</dbReference>
<dbReference type="OrthoDB" id="9804753at2"/>
<dbReference type="BRENDA" id="1.3.1.98">
    <property type="organism ID" value="319"/>
</dbReference>
<dbReference type="UniPathway" id="UPA00219"/>
<dbReference type="Proteomes" id="UP000002483">
    <property type="component" value="Chromosome"/>
</dbReference>
<dbReference type="GO" id="GO:0005829">
    <property type="term" value="C:cytosol"/>
    <property type="evidence" value="ECO:0007669"/>
    <property type="project" value="TreeGrafter"/>
</dbReference>
<dbReference type="GO" id="GO:0071949">
    <property type="term" value="F:FAD binding"/>
    <property type="evidence" value="ECO:0007669"/>
    <property type="project" value="InterPro"/>
</dbReference>
<dbReference type="GO" id="GO:0008762">
    <property type="term" value="F:UDP-N-acetylmuramate dehydrogenase activity"/>
    <property type="evidence" value="ECO:0007669"/>
    <property type="project" value="UniProtKB-UniRule"/>
</dbReference>
<dbReference type="GO" id="GO:0051301">
    <property type="term" value="P:cell division"/>
    <property type="evidence" value="ECO:0007669"/>
    <property type="project" value="UniProtKB-KW"/>
</dbReference>
<dbReference type="GO" id="GO:0071555">
    <property type="term" value="P:cell wall organization"/>
    <property type="evidence" value="ECO:0007669"/>
    <property type="project" value="UniProtKB-KW"/>
</dbReference>
<dbReference type="GO" id="GO:0009252">
    <property type="term" value="P:peptidoglycan biosynthetic process"/>
    <property type="evidence" value="ECO:0007669"/>
    <property type="project" value="UniProtKB-UniRule"/>
</dbReference>
<dbReference type="GO" id="GO:0008360">
    <property type="term" value="P:regulation of cell shape"/>
    <property type="evidence" value="ECO:0007669"/>
    <property type="project" value="UniProtKB-KW"/>
</dbReference>
<dbReference type="Gene3D" id="3.30.465.10">
    <property type="match status" value="1"/>
</dbReference>
<dbReference type="Gene3D" id="3.90.78.10">
    <property type="entry name" value="UDP-N-acetylenolpyruvoylglucosamine reductase, C-terminal domain"/>
    <property type="match status" value="1"/>
</dbReference>
<dbReference type="Gene3D" id="3.30.43.10">
    <property type="entry name" value="Uridine Diphospho-n-acetylenolpyruvylglucosamine Reductase, domain 2"/>
    <property type="match status" value="1"/>
</dbReference>
<dbReference type="HAMAP" id="MF_00037">
    <property type="entry name" value="MurB"/>
    <property type="match status" value="1"/>
</dbReference>
<dbReference type="InterPro" id="IPR016166">
    <property type="entry name" value="FAD-bd_PCMH"/>
</dbReference>
<dbReference type="InterPro" id="IPR036318">
    <property type="entry name" value="FAD-bd_PCMH-like_sf"/>
</dbReference>
<dbReference type="InterPro" id="IPR016167">
    <property type="entry name" value="FAD-bd_PCMH_sub1"/>
</dbReference>
<dbReference type="InterPro" id="IPR016169">
    <property type="entry name" value="FAD-bd_PCMH_sub2"/>
</dbReference>
<dbReference type="InterPro" id="IPR003170">
    <property type="entry name" value="MurB"/>
</dbReference>
<dbReference type="InterPro" id="IPR011601">
    <property type="entry name" value="MurB_C"/>
</dbReference>
<dbReference type="InterPro" id="IPR036635">
    <property type="entry name" value="MurB_C_sf"/>
</dbReference>
<dbReference type="InterPro" id="IPR006094">
    <property type="entry name" value="Oxid_FAD_bind_N"/>
</dbReference>
<dbReference type="NCBIfam" id="TIGR00179">
    <property type="entry name" value="murB"/>
    <property type="match status" value="1"/>
</dbReference>
<dbReference type="NCBIfam" id="NF010480">
    <property type="entry name" value="PRK13905.1"/>
    <property type="match status" value="1"/>
</dbReference>
<dbReference type="PANTHER" id="PTHR21071">
    <property type="entry name" value="UDP-N-ACETYLENOLPYRUVOYLGLUCOSAMINE REDUCTASE"/>
    <property type="match status" value="1"/>
</dbReference>
<dbReference type="PANTHER" id="PTHR21071:SF4">
    <property type="entry name" value="UDP-N-ACETYLENOLPYRUVOYLGLUCOSAMINE REDUCTASE"/>
    <property type="match status" value="1"/>
</dbReference>
<dbReference type="Pfam" id="PF01565">
    <property type="entry name" value="FAD_binding_4"/>
    <property type="match status" value="1"/>
</dbReference>
<dbReference type="Pfam" id="PF02873">
    <property type="entry name" value="MurB_C"/>
    <property type="match status" value="1"/>
</dbReference>
<dbReference type="SUPFAM" id="SSF56176">
    <property type="entry name" value="FAD-binding/transporter-associated domain-like"/>
    <property type="match status" value="1"/>
</dbReference>
<dbReference type="SUPFAM" id="SSF56194">
    <property type="entry name" value="Uridine diphospho-N-Acetylenolpyruvylglucosamine reductase, MurB, C-terminal domain"/>
    <property type="match status" value="1"/>
</dbReference>
<dbReference type="PROSITE" id="PS51387">
    <property type="entry name" value="FAD_PCMH"/>
    <property type="match status" value="1"/>
</dbReference>
<sequence>MKISQAVGNACTVPASSVETHNNNPSKESKIIYLPGTNCEIKSQALLSAFTSYRVGGAAELYVAPRNIEALQASLRYAQEHNLRVTTLGAGSNLLVSDRGISGLVIATRHLRYTHFDHQTGQVTIAAGESIPSLAWEIAKLGWQGFEWAVGIPGTVGGAVVMNAGAHNSCIADILVSAQVLSPDGTVETLTPEELGYAYRTSLLQGSNRVVTQATFQLQPGFDPAYVTATTKQHKQMRLTTQPYNFPSCGSVFRNPKPYSAGWLIEQSGLKGYQIGGAQVAHLHANFIVNRGGAKANDIFCLIRHIQQEVQERWSILLEPEVKMLGEFQAA</sequence>
<organism>
    <name type="scientific">Nostoc sp. (strain PCC 7120 / SAG 25.82 / UTEX 2576)</name>
    <dbReference type="NCBI Taxonomy" id="103690"/>
    <lineage>
        <taxon>Bacteria</taxon>
        <taxon>Bacillati</taxon>
        <taxon>Cyanobacteriota</taxon>
        <taxon>Cyanophyceae</taxon>
        <taxon>Nostocales</taxon>
        <taxon>Nostocaceae</taxon>
        <taxon>Nostoc</taxon>
    </lineage>
</organism>
<protein>
    <recommendedName>
        <fullName evidence="1">UDP-N-acetylenolpyruvoylglucosamine reductase</fullName>
        <ecNumber evidence="1">1.3.1.98</ecNumber>
    </recommendedName>
    <alternativeName>
        <fullName evidence="1">UDP-N-acetylmuramate dehydrogenase</fullName>
    </alternativeName>
</protein>
<name>MURB_NOSS1</name>
<evidence type="ECO:0000255" key="1">
    <source>
        <dbReference type="HAMAP-Rule" id="MF_00037"/>
    </source>
</evidence>
<keyword id="KW-0131">Cell cycle</keyword>
<keyword id="KW-0132">Cell division</keyword>
<keyword id="KW-0133">Cell shape</keyword>
<keyword id="KW-0961">Cell wall biogenesis/degradation</keyword>
<keyword id="KW-0963">Cytoplasm</keyword>
<keyword id="KW-0274">FAD</keyword>
<keyword id="KW-0285">Flavoprotein</keyword>
<keyword id="KW-0521">NADP</keyword>
<keyword id="KW-0560">Oxidoreductase</keyword>
<keyword id="KW-0573">Peptidoglycan synthesis</keyword>
<keyword id="KW-1185">Reference proteome</keyword>
<reference key="1">
    <citation type="journal article" date="2001" name="DNA Res.">
        <title>Complete genomic sequence of the filamentous nitrogen-fixing cyanobacterium Anabaena sp. strain PCC 7120.</title>
        <authorList>
            <person name="Kaneko T."/>
            <person name="Nakamura Y."/>
            <person name="Wolk C.P."/>
            <person name="Kuritz T."/>
            <person name="Sasamoto S."/>
            <person name="Watanabe A."/>
            <person name="Iriguchi M."/>
            <person name="Ishikawa A."/>
            <person name="Kawashima K."/>
            <person name="Kimura T."/>
            <person name="Kishida Y."/>
            <person name="Kohara M."/>
            <person name="Matsumoto M."/>
            <person name="Matsuno A."/>
            <person name="Muraki A."/>
            <person name="Nakazaki N."/>
            <person name="Shimpo S."/>
            <person name="Sugimoto M."/>
            <person name="Takazawa M."/>
            <person name="Yamada M."/>
            <person name="Yasuda M."/>
            <person name="Tabata S."/>
        </authorList>
    </citation>
    <scope>NUCLEOTIDE SEQUENCE [LARGE SCALE GENOMIC DNA]</scope>
    <source>
        <strain>PCC 7120 / SAG 25.82 / UTEX 2576</strain>
    </source>
</reference>
<feature type="chain" id="PRO_0000179170" description="UDP-N-acetylenolpyruvoylglucosamine reductase">
    <location>
        <begin position="1"/>
        <end position="331"/>
    </location>
</feature>
<feature type="domain" description="FAD-binding PCMH-type" evidence="1">
    <location>
        <begin position="54"/>
        <end position="221"/>
    </location>
</feature>
<feature type="active site" evidence="1">
    <location>
        <position position="200"/>
    </location>
</feature>
<feature type="active site" description="Proton donor" evidence="1">
    <location>
        <position position="251"/>
    </location>
</feature>
<feature type="active site" evidence="1">
    <location>
        <position position="321"/>
    </location>
</feature>
<comment type="function">
    <text evidence="1">Cell wall formation.</text>
</comment>
<comment type="catalytic activity">
    <reaction evidence="1">
        <text>UDP-N-acetyl-alpha-D-muramate + NADP(+) = UDP-N-acetyl-3-O-(1-carboxyvinyl)-alpha-D-glucosamine + NADPH + H(+)</text>
        <dbReference type="Rhea" id="RHEA:12248"/>
        <dbReference type="ChEBI" id="CHEBI:15378"/>
        <dbReference type="ChEBI" id="CHEBI:57783"/>
        <dbReference type="ChEBI" id="CHEBI:58349"/>
        <dbReference type="ChEBI" id="CHEBI:68483"/>
        <dbReference type="ChEBI" id="CHEBI:70757"/>
        <dbReference type="EC" id="1.3.1.98"/>
    </reaction>
</comment>
<comment type="cofactor">
    <cofactor evidence="1">
        <name>FAD</name>
        <dbReference type="ChEBI" id="CHEBI:57692"/>
    </cofactor>
</comment>
<comment type="pathway">
    <text evidence="1">Cell wall biogenesis; peptidoglycan biosynthesis.</text>
</comment>
<comment type="subcellular location">
    <subcellularLocation>
        <location evidence="1">Cytoplasm</location>
    </subcellularLocation>
</comment>
<comment type="similarity">
    <text evidence="1">Belongs to the MurB family.</text>
</comment>
<accession>Q8YM74</accession>